<dbReference type="EC" id="3.1.21.-"/>
<dbReference type="EMBL" id="BC126724">
    <property type="protein sequence ID" value="AAI26725.1"/>
    <property type="molecule type" value="mRNA"/>
</dbReference>
<dbReference type="RefSeq" id="NP_001073789.1">
    <property type="nucleotide sequence ID" value="NM_001080320.1"/>
</dbReference>
<dbReference type="SMR" id="A1A4M4"/>
<dbReference type="FunCoup" id="A1A4M4">
    <property type="interactions" value="581"/>
</dbReference>
<dbReference type="STRING" id="9913.ENSBTAP00000048497"/>
<dbReference type="PaxDb" id="9913-ENSBTAP00000048497"/>
<dbReference type="GeneID" id="615965"/>
<dbReference type="KEGG" id="bta:615965"/>
<dbReference type="CTD" id="128387"/>
<dbReference type="VEuPathDB" id="HostDB:ENSBTAG00000024443"/>
<dbReference type="eggNOG" id="KOG3020">
    <property type="taxonomic scope" value="Eukaryota"/>
</dbReference>
<dbReference type="HOGENOM" id="CLU_031506_5_3_1"/>
<dbReference type="InParanoid" id="A1A4M4"/>
<dbReference type="OMA" id="HTHLDMQ"/>
<dbReference type="OrthoDB" id="413993at2759"/>
<dbReference type="TreeFam" id="TF314175"/>
<dbReference type="Proteomes" id="UP000009136">
    <property type="component" value="Chromosome 16"/>
</dbReference>
<dbReference type="Bgee" id="ENSBTAG00000024443">
    <property type="expression patterns" value="Expressed in caput epididymis and 107 other cell types or tissues"/>
</dbReference>
<dbReference type="GO" id="GO:0005634">
    <property type="term" value="C:nucleus"/>
    <property type="evidence" value="ECO:0007669"/>
    <property type="project" value="UniProtKB-SubCell"/>
</dbReference>
<dbReference type="GO" id="GO:0046872">
    <property type="term" value="F:metal ion binding"/>
    <property type="evidence" value="ECO:0007669"/>
    <property type="project" value="UniProtKB-KW"/>
</dbReference>
<dbReference type="GO" id="GO:0004518">
    <property type="term" value="F:nuclease activity"/>
    <property type="evidence" value="ECO:0007669"/>
    <property type="project" value="UniProtKB-KW"/>
</dbReference>
<dbReference type="CDD" id="cd01310">
    <property type="entry name" value="TatD_DNAse"/>
    <property type="match status" value="1"/>
</dbReference>
<dbReference type="Gene3D" id="3.20.20.140">
    <property type="entry name" value="Metal-dependent hydrolases"/>
    <property type="match status" value="1"/>
</dbReference>
<dbReference type="InterPro" id="IPR032466">
    <property type="entry name" value="Metal_Hydrolase"/>
</dbReference>
<dbReference type="InterPro" id="IPR001130">
    <property type="entry name" value="TatD-like"/>
</dbReference>
<dbReference type="PANTHER" id="PTHR46317:SF7">
    <property type="entry name" value="DEOXYRIBONUCLEASE TATDN3-RELATED"/>
    <property type="match status" value="1"/>
</dbReference>
<dbReference type="PANTHER" id="PTHR46317">
    <property type="entry name" value="HYDROLASE OF PHP SUPERFAMILY-RELATED PROTEIN"/>
    <property type="match status" value="1"/>
</dbReference>
<dbReference type="Pfam" id="PF01026">
    <property type="entry name" value="TatD_DNase"/>
    <property type="match status" value="1"/>
</dbReference>
<dbReference type="PIRSF" id="PIRSF005902">
    <property type="entry name" value="DNase_TatD"/>
    <property type="match status" value="1"/>
</dbReference>
<dbReference type="SUPFAM" id="SSF51556">
    <property type="entry name" value="Metallo-dependent hydrolases"/>
    <property type="match status" value="1"/>
</dbReference>
<evidence type="ECO:0000250" key="1">
    <source>
        <dbReference type="UniProtKB" id="Q17R31"/>
    </source>
</evidence>
<evidence type="ECO:0000250" key="2">
    <source>
        <dbReference type="UniProtKB" id="Q6P1N9"/>
    </source>
</evidence>
<evidence type="ECO:0000305" key="3"/>
<comment type="function">
    <text evidence="1">Exhibits 3'-exonuclease activities and apurinic/apyrimidinic (AP) endonuclease (in vitro). Show preferential AP endonuclease activity on double-stranded DNA substrates and 3'- exonuclease activity on single-stranded DNA.</text>
</comment>
<comment type="cofactor">
    <cofactor evidence="1">
        <name>Mn(2+)</name>
        <dbReference type="ChEBI" id="CHEBI:29035"/>
    </cofactor>
    <cofactor evidence="1">
        <name>Ca(2+)</name>
        <dbReference type="ChEBI" id="CHEBI:29108"/>
    </cofactor>
    <cofactor evidence="1">
        <name>Mg(2+)</name>
        <dbReference type="ChEBI" id="CHEBI:18420"/>
    </cofactor>
    <cofactor evidence="1">
        <name>Zn(2+)</name>
        <dbReference type="ChEBI" id="CHEBI:29105"/>
    </cofactor>
    <text evidence="1 2">Binds 2 Zn(2+) per subunit (By similarity). Exhibits AP endonuclease and 3'-exonuclease activities in the presence of Mg(2+) and Mn(2+). In contrast, in the presence of Ca(2+), shows AP endonuclease activity exclusively (By similarity).</text>
</comment>
<comment type="activity regulation">
    <text evidence="1">The 3'-exonuclease activity is sensitive to the metal ion present in the active site, whereas the AP endodeoxyribonuclease activity is observed in a variety of divalent metal cofactors. 3'-exoxonuclease activity is suppressed in the presence of Ca(2+), Zn(2+) and Ni(2+).</text>
</comment>
<comment type="subcellular location">
    <subcellularLocation>
        <location evidence="3">Nucleus</location>
    </subcellularLocation>
</comment>
<comment type="similarity">
    <text evidence="3">Belongs to the metallo-dependent hydrolases superfamily. TatD-type hydrolase family.</text>
</comment>
<keyword id="KW-0378">Hydrolase</keyword>
<keyword id="KW-0479">Metal-binding</keyword>
<keyword id="KW-0540">Nuclease</keyword>
<keyword id="KW-0539">Nucleus</keyword>
<keyword id="KW-1185">Reference proteome</keyword>
<keyword id="KW-0862">Zinc</keyword>
<accession>A1A4M4</accession>
<proteinExistence type="evidence at transcript level"/>
<reference key="1">
    <citation type="submission" date="2006-10" db="EMBL/GenBank/DDBJ databases">
        <authorList>
            <consortium name="NIH - Mammalian Gene Collection (MGC) project"/>
        </authorList>
    </citation>
    <scope>NUCLEOTIDE SEQUENCE [LARGE SCALE MRNA]</scope>
    <source>
        <strain>Hereford</strain>
        <tissue>Fetal skin</tissue>
    </source>
</reference>
<protein>
    <recommendedName>
        <fullName>Putative deoxyribonuclease TATDN3</fullName>
        <ecNumber>3.1.21.-</ecNumber>
    </recommendedName>
</protein>
<sequence length="273" mass="30013">MGAVGVGLVDCHCHLSAPDFDHDLDDVLKKAKEANVMALVVVAEHSGEFEKIMQLSQRYNGFVLPCLGVHPVQGVSPEDQRSVTLKDLDVALPIIENYKDQLLAIGEVGLDFSPRFAGTDEQKEEQRQVLIRQVQLAKRLNLPLNVHSRSAGRPTISLLNEQGADKVLLHAFDGRPSVAMEGVKAGYFFSIPPSIIRSGQQKLVKQLPLTSICLETDSPALGPEKQVRNEPRNISISAEYIAQVKGVSVEEVIEVTTQNALKLFPKLQRLLPK</sequence>
<organism>
    <name type="scientific">Bos taurus</name>
    <name type="common">Bovine</name>
    <dbReference type="NCBI Taxonomy" id="9913"/>
    <lineage>
        <taxon>Eukaryota</taxon>
        <taxon>Metazoa</taxon>
        <taxon>Chordata</taxon>
        <taxon>Craniata</taxon>
        <taxon>Vertebrata</taxon>
        <taxon>Euteleostomi</taxon>
        <taxon>Mammalia</taxon>
        <taxon>Eutheria</taxon>
        <taxon>Laurasiatheria</taxon>
        <taxon>Artiodactyla</taxon>
        <taxon>Ruminantia</taxon>
        <taxon>Pecora</taxon>
        <taxon>Bovidae</taxon>
        <taxon>Bovinae</taxon>
        <taxon>Bos</taxon>
    </lineage>
</organism>
<name>TATD3_BOVIN</name>
<feature type="chain" id="PRO_0000313594" description="Putative deoxyribonuclease TATDN3">
    <location>
        <begin position="1"/>
        <end position="273"/>
    </location>
</feature>
<feature type="binding site" evidence="1">
    <location>
        <position position="12"/>
    </location>
    <ligand>
        <name>Zn(2+)</name>
        <dbReference type="ChEBI" id="CHEBI:29105"/>
        <label>1</label>
    </ligand>
</feature>
<feature type="binding site" evidence="1">
    <location>
        <position position="14"/>
    </location>
    <ligand>
        <name>Zn(2+)</name>
        <dbReference type="ChEBI" id="CHEBI:29105"/>
        <label>1</label>
    </ligand>
</feature>
<feature type="binding site" evidence="1">
    <location>
        <position position="107"/>
    </location>
    <ligand>
        <name>Zn(2+)</name>
        <dbReference type="ChEBI" id="CHEBI:29105"/>
        <label>1</label>
    </ligand>
</feature>
<feature type="binding site" evidence="1">
    <location>
        <position position="107"/>
    </location>
    <ligand>
        <name>Zn(2+)</name>
        <dbReference type="ChEBI" id="CHEBI:29105"/>
        <label>2</label>
    </ligand>
</feature>
<feature type="binding site" evidence="1">
    <location>
        <position position="147"/>
    </location>
    <ligand>
        <name>Zn(2+)</name>
        <dbReference type="ChEBI" id="CHEBI:29105"/>
        <label>2</label>
    </ligand>
</feature>
<feature type="binding site" evidence="1">
    <location>
        <position position="170"/>
    </location>
    <ligand>
        <name>Zn(2+)</name>
        <dbReference type="ChEBI" id="CHEBI:29105"/>
        <label>2</label>
    </ligand>
</feature>
<feature type="binding site" evidence="1">
    <location>
        <position position="217"/>
    </location>
    <ligand>
        <name>Zn(2+)</name>
        <dbReference type="ChEBI" id="CHEBI:29105"/>
        <label>1</label>
    </ligand>
</feature>
<gene>
    <name type="primary">TATDN3</name>
</gene>